<organism>
    <name type="scientific">Rickettsia massiliae (strain Mtu5)</name>
    <dbReference type="NCBI Taxonomy" id="416276"/>
    <lineage>
        <taxon>Bacteria</taxon>
        <taxon>Pseudomonadati</taxon>
        <taxon>Pseudomonadota</taxon>
        <taxon>Alphaproteobacteria</taxon>
        <taxon>Rickettsiales</taxon>
        <taxon>Rickettsiaceae</taxon>
        <taxon>Rickettsieae</taxon>
        <taxon>Rickettsia</taxon>
        <taxon>spotted fever group</taxon>
    </lineage>
</organism>
<feature type="chain" id="PRO_1000060804" description="Large ribosomal subunit protein bL19">
    <location>
        <begin position="1"/>
        <end position="138"/>
    </location>
</feature>
<protein>
    <recommendedName>
        <fullName evidence="1">Large ribosomal subunit protein bL19</fullName>
    </recommendedName>
    <alternativeName>
        <fullName evidence="2">50S ribosomal protein L19</fullName>
    </alternativeName>
</protein>
<keyword id="KW-0687">Ribonucleoprotein</keyword>
<keyword id="KW-0689">Ribosomal protein</keyword>
<comment type="function">
    <text evidence="1">This protein is located at the 30S-50S ribosomal subunit interface and may play a role in the structure and function of the aminoacyl-tRNA binding site.</text>
</comment>
<comment type="similarity">
    <text evidence="1">Belongs to the bacterial ribosomal protein bL19 family.</text>
</comment>
<dbReference type="EMBL" id="CP000683">
    <property type="protein sequence ID" value="ABV84453.1"/>
    <property type="molecule type" value="Genomic_DNA"/>
</dbReference>
<dbReference type="RefSeq" id="WP_012152432.1">
    <property type="nucleotide sequence ID" value="NC_009900.1"/>
</dbReference>
<dbReference type="SMR" id="A8F0L7"/>
<dbReference type="KEGG" id="rms:RMA_0159"/>
<dbReference type="HOGENOM" id="CLU_103507_1_0_5"/>
<dbReference type="Proteomes" id="UP000001311">
    <property type="component" value="Chromosome"/>
</dbReference>
<dbReference type="GO" id="GO:0022625">
    <property type="term" value="C:cytosolic large ribosomal subunit"/>
    <property type="evidence" value="ECO:0007669"/>
    <property type="project" value="TreeGrafter"/>
</dbReference>
<dbReference type="GO" id="GO:0003735">
    <property type="term" value="F:structural constituent of ribosome"/>
    <property type="evidence" value="ECO:0007669"/>
    <property type="project" value="InterPro"/>
</dbReference>
<dbReference type="GO" id="GO:0006412">
    <property type="term" value="P:translation"/>
    <property type="evidence" value="ECO:0007669"/>
    <property type="project" value="UniProtKB-UniRule"/>
</dbReference>
<dbReference type="Gene3D" id="2.30.30.790">
    <property type="match status" value="1"/>
</dbReference>
<dbReference type="HAMAP" id="MF_00402">
    <property type="entry name" value="Ribosomal_bL19"/>
    <property type="match status" value="1"/>
</dbReference>
<dbReference type="InterPro" id="IPR001857">
    <property type="entry name" value="Ribosomal_bL19"/>
</dbReference>
<dbReference type="InterPro" id="IPR018257">
    <property type="entry name" value="Ribosomal_bL19_CS"/>
</dbReference>
<dbReference type="InterPro" id="IPR038657">
    <property type="entry name" value="Ribosomal_bL19_sf"/>
</dbReference>
<dbReference type="InterPro" id="IPR008991">
    <property type="entry name" value="Translation_prot_SH3-like_sf"/>
</dbReference>
<dbReference type="NCBIfam" id="TIGR01024">
    <property type="entry name" value="rplS_bact"/>
    <property type="match status" value="1"/>
</dbReference>
<dbReference type="PANTHER" id="PTHR15680:SF9">
    <property type="entry name" value="LARGE RIBOSOMAL SUBUNIT PROTEIN BL19M"/>
    <property type="match status" value="1"/>
</dbReference>
<dbReference type="PANTHER" id="PTHR15680">
    <property type="entry name" value="RIBOSOMAL PROTEIN L19"/>
    <property type="match status" value="1"/>
</dbReference>
<dbReference type="Pfam" id="PF01245">
    <property type="entry name" value="Ribosomal_L19"/>
    <property type="match status" value="1"/>
</dbReference>
<dbReference type="PIRSF" id="PIRSF002191">
    <property type="entry name" value="Ribosomal_L19"/>
    <property type="match status" value="1"/>
</dbReference>
<dbReference type="PRINTS" id="PR00061">
    <property type="entry name" value="RIBOSOMALL19"/>
</dbReference>
<dbReference type="SUPFAM" id="SSF50104">
    <property type="entry name" value="Translation proteins SH3-like domain"/>
    <property type="match status" value="1"/>
</dbReference>
<dbReference type="PROSITE" id="PS01015">
    <property type="entry name" value="RIBOSOMAL_L19"/>
    <property type="match status" value="1"/>
</dbReference>
<proteinExistence type="inferred from homology"/>
<gene>
    <name evidence="1" type="primary">rplS</name>
    <name type="ordered locus">RMA_0159</name>
</gene>
<name>RL19_RICM5</name>
<sequence>MNIIDHFEQENISKRTANTKIPEFEAGDTVKVTVKIIDRSIEKDGKEKLTERFQAYEGVVIAKRNRGITSSFLVRKISHGEGVERRFMTYSPIVHSIDVVKYGVVRRAKLYYLRNRSGKSARIKERHIPIAKTKAAKA</sequence>
<reference key="1">
    <citation type="journal article" date="2007" name="Genome Res.">
        <title>Lateral gene transfer between obligate intracellular bacteria: evidence from the Rickettsia massiliae genome.</title>
        <authorList>
            <person name="Blanc G."/>
            <person name="Ogata H."/>
            <person name="Robert C."/>
            <person name="Audic S."/>
            <person name="Claverie J.-M."/>
            <person name="Raoult D."/>
        </authorList>
    </citation>
    <scope>NUCLEOTIDE SEQUENCE [LARGE SCALE GENOMIC DNA]</scope>
    <source>
        <strain>Mtu5</strain>
    </source>
</reference>
<accession>A8F0L7</accession>
<evidence type="ECO:0000255" key="1">
    <source>
        <dbReference type="HAMAP-Rule" id="MF_00402"/>
    </source>
</evidence>
<evidence type="ECO:0000305" key="2"/>